<accession>Q9JJ50</accession>
<accession>P97847</accession>
<accession>Q5XIV8</accession>
<accession>Q76N76</accession>
<name>HGS_RAT</name>
<reference key="1">
    <citation type="journal article" date="1997" name="Nature">
        <title>Hrs-2 is an ATPase implicated in calcium-regulated secretion.</title>
        <authorList>
            <person name="Bean A.J."/>
            <person name="Seifert R."/>
            <person name="Chen Y.A."/>
            <person name="Sacks R."/>
            <person name="Scheller R.H."/>
        </authorList>
    </citation>
    <scope>NUCLEOTIDE SEQUENCE [MRNA] (ISOFORM 1)</scope>
    <scope>TISSUE SPECIFICITY</scope>
    <scope>INTERACTION WITH SNAP25</scope>
</reference>
<reference key="2">
    <citation type="journal article" date="1998" name="J. Neurochem.">
        <title>Molecular cloning of a rat brain cDNA, with homology to a tyrosine kinase substrate, that induces galactosylceramide expression in COS-7 cells.</title>
        <authorList>
            <person name="Ogura K."/>
            <person name="Kohno K."/>
            <person name="Tai T."/>
        </authorList>
    </citation>
    <scope>NUCLEOTIDE SEQUENCE [MRNA] (ISOFORM 2)</scope>
    <scope>TISSUE SPECIFICITY</scope>
    <source>
        <strain>Wistar</strain>
        <tissue>Brain</tissue>
    </source>
</reference>
<reference key="3">
    <citation type="journal article" date="2000" name="J. Cell Sci.">
        <title>Hrs interacts with SNAP-25 and regulates Ca2+-dependent exocytosis.</title>
        <authorList>
            <person name="Kwong J."/>
            <person name="Roudabush F.L."/>
            <person name="Moore P.H."/>
            <person name="Montague M."/>
            <person name="Oldham W."/>
            <person name="Li Y."/>
            <person name="Chin L.-S."/>
            <person name="Li L."/>
        </authorList>
    </citation>
    <scope>NUCLEOTIDE SEQUENCE [MRNA] (ISOFORM 1)</scope>
    <scope>TISSUE SPECIFICITY</scope>
    <scope>SUBCELLULAR LOCATION</scope>
    <scope>DOMAIN</scope>
    <scope>INTERACTION WITH SNAP25</scope>
</reference>
<reference key="4">
    <citation type="journal article" date="2004" name="Genome Res.">
        <title>The status, quality, and expansion of the NIH full-length cDNA project: the Mammalian Gene Collection (MGC).</title>
        <authorList>
            <consortium name="The MGC Project Team"/>
        </authorList>
    </citation>
    <scope>NUCLEOTIDE SEQUENCE [LARGE SCALE MRNA] (ISOFORM 2)</scope>
    <source>
        <tissue>Testis</tissue>
    </source>
</reference>
<reference key="5">
    <citation type="journal article" date="2000" name="J. Biol. Chem.">
        <title>Hrs-2 regulates receptor-mediated endocytosis via interactions with Eps15.</title>
        <authorList>
            <person name="Bean A.J."/>
            <person name="Davanger S."/>
            <person name="Chou M.F."/>
            <person name="Gerhardt B."/>
            <person name="Tsujimoto S."/>
            <person name="Chang Y."/>
        </authorList>
    </citation>
    <scope>INTERACTION WITH EPS15</scope>
</reference>
<reference key="6">
    <citation type="journal article" date="2001" name="J. Biol. Chem.">
        <title>Hrs interacts with sorting nexin 1 and regulates degradation of epidermal growth factor receptor.</title>
        <authorList>
            <person name="Chin L.-S."/>
            <person name="Raynor M.C."/>
            <person name="Wei X."/>
            <person name="Chen H.-Q."/>
            <person name="Li L."/>
        </authorList>
    </citation>
    <scope>INTERACTION WITH SNX1</scope>
    <scope>DOMAIN</scope>
</reference>
<reference key="7">
    <citation type="journal article" date="2006" name="J. Cell Sci.">
        <title>GRIF1 binds Hrs and is a new regulator of endosomal trafficking.</title>
        <authorList>
            <person name="Kirk E."/>
            <person name="Chin L.S."/>
            <person name="Li L."/>
        </authorList>
    </citation>
    <scope>INTERACTION WITH TRAK2</scope>
</reference>
<gene>
    <name type="primary">Hgs</name>
    <name type="synonym">Hrs</name>
    <name type="synonym">Hrs2</name>
</gene>
<organism>
    <name type="scientific">Rattus norvegicus</name>
    <name type="common">Rat</name>
    <dbReference type="NCBI Taxonomy" id="10116"/>
    <lineage>
        <taxon>Eukaryota</taxon>
        <taxon>Metazoa</taxon>
        <taxon>Chordata</taxon>
        <taxon>Craniata</taxon>
        <taxon>Vertebrata</taxon>
        <taxon>Euteleostomi</taxon>
        <taxon>Mammalia</taxon>
        <taxon>Eutheria</taxon>
        <taxon>Euarchontoglires</taxon>
        <taxon>Glires</taxon>
        <taxon>Rodentia</taxon>
        <taxon>Myomorpha</taxon>
        <taxon>Muroidea</taxon>
        <taxon>Muridae</taxon>
        <taxon>Murinae</taxon>
        <taxon>Rattus</taxon>
    </lineage>
</organism>
<proteinExistence type="evidence at protein level"/>
<sequence>MGRGSGTFERLLDKATSQLLLETDWESILQICDLIRQGDTQAKYAVNSIKKKVNDKNPHVALYALEVMESVVKNCGQTVHDEVANKQTMEELKELLKRQVEVNVRNKILYLIQAWAHAFRNEPKYKVVQDTYQIMKVEGHVFPEFKESDAMFAAERAPDWVDAEECHRCRVQFGVVTRKHHCRACGQIFCGKCSSKYSTIPKFGIEKEVRVCEPCYEQLNKKAEGKAASTTELPPEYLTSPLSQQSQLPPKRDETALQEEEELQLALALSQSEAEEKERMRQKSTYTAHPKSEPAPLASSAPPAGSLYSSPVNSSAPLAEDIDPELARYLNRNYWEKKQEEARKSPTPSAPVPLTEPAAQPGEGHTAPNSMVEAPLPETDSQPITSCSGPFSEQYQNGESEESHEQFLKALQNAVSTFVNRMKSNHMRGRSITNDSAVLSLFQSINSTHPQLLELLNRLDERRLYYEGLQDKLAQIRDARGALSALREEHREKLRRAAEEAERQRQIQLAQKLEIMRQKKQEYLEVQRQLAIQRLQEQEKERQMRLEQQKQTVQMRAQMPAFPLPYAQLQAMPTAGGVLYQPSGPTSFPGTFSPAGSVEGSPMHGVYMSQPAPATGPYPSMPGTTADPSMVSAYMYPAGAPGAQAAPQAQAGPTTNPAYSSYQPTPTPGYQNVASQAPQSLPAISQPPQTSNIGYMGSQPMSMGYQPYNMQNLMTTLPGQDASLPAQQPYITGQQPMYQQMAPSTGPPQQQPPVAQPPPTQGPPAQGNETQLISFD</sequence>
<feature type="chain" id="PRO_0000098710" description="Hepatocyte growth factor-regulated tyrosine kinase substrate">
    <location>
        <begin position="1"/>
        <end position="776"/>
    </location>
</feature>
<feature type="domain" description="VHS" evidence="6">
    <location>
        <begin position="15"/>
        <end position="143"/>
    </location>
</feature>
<feature type="domain" description="UIM" evidence="5">
    <location>
        <begin position="258"/>
        <end position="277"/>
    </location>
</feature>
<feature type="zinc finger region" description="FYVE-type" evidence="4">
    <location>
        <begin position="160"/>
        <end position="220"/>
    </location>
</feature>
<feature type="region of interest" description="Disordered" evidence="7">
    <location>
        <begin position="223"/>
        <end position="319"/>
    </location>
</feature>
<feature type="region of interest" description="Interaction with SNX1" evidence="10">
    <location>
        <begin position="225"/>
        <end position="542"/>
    </location>
</feature>
<feature type="region of interest" description="Disordered" evidence="7">
    <location>
        <begin position="338"/>
        <end position="401"/>
    </location>
</feature>
<feature type="region of interest" description="Interaction with SNAP25 and TRAK2" evidence="11">
    <location>
        <begin position="444"/>
        <end position="542"/>
    </location>
</feature>
<feature type="region of interest" description="Interaction with STAM" evidence="3">
    <location>
        <begin position="453"/>
        <end position="571"/>
    </location>
</feature>
<feature type="region of interest" description="Interaction with NF2" evidence="1">
    <location>
        <begin position="479"/>
        <end position="776"/>
    </location>
</feature>
<feature type="region of interest" description="Disordered" evidence="7">
    <location>
        <begin position="719"/>
        <end position="776"/>
    </location>
</feature>
<feature type="compositionally biased region" description="Low complexity" evidence="7">
    <location>
        <begin position="294"/>
        <end position="311"/>
    </location>
</feature>
<feature type="compositionally biased region" description="Polar residues" evidence="7">
    <location>
        <begin position="379"/>
        <end position="398"/>
    </location>
</feature>
<feature type="compositionally biased region" description="Polar residues" evidence="7">
    <location>
        <begin position="725"/>
        <end position="743"/>
    </location>
</feature>
<feature type="compositionally biased region" description="Pro residues" evidence="7">
    <location>
        <begin position="745"/>
        <end position="762"/>
    </location>
</feature>
<feature type="compositionally biased region" description="Polar residues" evidence="7">
    <location>
        <begin position="767"/>
        <end position="776"/>
    </location>
</feature>
<feature type="binding site" evidence="4">
    <location>
        <position position="166"/>
    </location>
    <ligand>
        <name>Zn(2+)</name>
        <dbReference type="ChEBI" id="CHEBI:29105"/>
        <label>1</label>
    </ligand>
</feature>
<feature type="binding site" evidence="4">
    <location>
        <position position="169"/>
    </location>
    <ligand>
        <name>Zn(2+)</name>
        <dbReference type="ChEBI" id="CHEBI:29105"/>
        <label>1</label>
    </ligand>
</feature>
<feature type="binding site" evidence="4">
    <location>
        <position position="182"/>
    </location>
    <ligand>
        <name>Zn(2+)</name>
        <dbReference type="ChEBI" id="CHEBI:29105"/>
        <label>2</label>
    </ligand>
</feature>
<feature type="binding site" evidence="4">
    <location>
        <position position="185"/>
    </location>
    <ligand>
        <name>Zn(2+)</name>
        <dbReference type="ChEBI" id="CHEBI:29105"/>
        <label>2</label>
    </ligand>
</feature>
<feature type="binding site" evidence="4">
    <location>
        <position position="190"/>
    </location>
    <ligand>
        <name>Zn(2+)</name>
        <dbReference type="ChEBI" id="CHEBI:29105"/>
        <label>1</label>
    </ligand>
</feature>
<feature type="binding site" evidence="4">
    <location>
        <position position="193"/>
    </location>
    <ligand>
        <name>Zn(2+)</name>
        <dbReference type="ChEBI" id="CHEBI:29105"/>
        <label>1</label>
    </ligand>
</feature>
<feature type="binding site" evidence="4">
    <location>
        <position position="212"/>
    </location>
    <ligand>
        <name>Zn(2+)</name>
        <dbReference type="ChEBI" id="CHEBI:29105"/>
        <label>2</label>
    </ligand>
</feature>
<feature type="binding site" evidence="4">
    <location>
        <position position="215"/>
    </location>
    <ligand>
        <name>Zn(2+)</name>
        <dbReference type="ChEBI" id="CHEBI:29105"/>
        <label>2</label>
    </ligand>
</feature>
<feature type="modified residue" description="N6-acetyllysine" evidence="2">
    <location>
        <position position="207"/>
    </location>
</feature>
<feature type="modified residue" description="Phosphotyrosine" evidence="2">
    <location>
        <position position="216"/>
    </location>
</feature>
<feature type="modified residue" description="Phosphotyrosine" evidence="3">
    <location>
        <position position="308"/>
    </location>
</feature>
<feature type="modified residue" description="Phosphotyrosine" evidence="3">
    <location>
        <position position="329"/>
    </location>
</feature>
<feature type="modified residue" description="Phosphotyrosine" evidence="3">
    <location>
        <position position="334"/>
    </location>
</feature>
<feature type="modified residue" description="N6-succinyllysine" evidence="3">
    <location>
        <position position="550"/>
    </location>
</feature>
<feature type="splice variant" id="VSP_014852" description="In isoform 2." evidence="14 15">
    <location>
        <begin position="671"/>
        <end position="675"/>
    </location>
</feature>
<feature type="sequence conflict" description="In Ref. 1; AAB49681." evidence="16" ref="1">
    <location>
        <position position="394"/>
    </location>
</feature>
<feature type="sequence conflict" description="In Ref. 4; AAH83561." evidence="16" ref="4">
    <original>G</original>
    <variation>A</variation>
    <location>
        <position position="398"/>
    </location>
</feature>
<feature type="sequence conflict" description="In Ref. 4; AAH83561." evidence="16" ref="4">
    <original>A</original>
    <variation>V</variation>
    <location>
        <position position="561"/>
    </location>
</feature>
<protein>
    <recommendedName>
        <fullName>Hepatocyte growth factor-regulated tyrosine kinase substrate</fullName>
    </recommendedName>
    <alternativeName>
        <fullName>SNAP-25-interacting protein Hrs-2</fullName>
    </alternativeName>
</protein>
<comment type="function">
    <text evidence="1">Involved in intracellular signal transduction mediated by cytokines and growth factors. When associated with STAM, it suppresses DNA signaling upon stimulation by IL-2 and GM-CSF. Could be a direct effector of PI3-kinase in vesicular pathway via early endosomes and may regulate trafficking to early and late endosomes by recruiting clathrin. May concentrate ubiquitinated receptors within clathrin-coated regions. Involved in down-regulation of receptor tyrosine kinase via multivesicular body (MVBs) when complexed with STAM (ESCRT-0 complex). The ESCRT-0 complex binds ubiquitin and acts as a sorting machinery that recognizes ubiquitinated receptors and transfers them to further sequential lysosomal sorting/trafficking processes. Involved in receptor recycling via its association with the CART complex, a multiprotein complex required for efficient transferrin receptor recycling but not for EGFR degradation (By similarity). May contribute to the efficient recruitment of SMADs to the activin receptor complex.</text>
</comment>
<comment type="subunit">
    <text evidence="2 3 8 9 10 11 12">Component of the ESCRT-0 complex composed of STAM or STAM2 and HGS. Part of a complex at least composed of HSG, STAM2 (or probably STAM) and EPS15 (By similarity). Interacts with STAM (By similarity). Interacts with STAM2 (By similarity). Interacts with EPS15; the interaction is direct, calcium-dependent and inhibited by SNAP25 (PubMed:10809762). Identified in a complex with STAM and LITAF (By similarity). Found in a complex with STAM and E3 ligase ITCH and DTX3L (By similarity). Interacts with E3 ligase DTX3L; the interaction brings together STAM and HSG, promotes their recruitment to early endosomes and decreases STAM and HGS ubiquitination by ITCH (By similarity). Interacts with NF2; the interaction is direct (By similarity). Interacts with ubiquitin; the interaction is direct (By similarity). Interacts with VPS37C (By similarity). Interacts with SMAD1, SMAD2 and SMAD3 (By similarity). Interacts with TSG101; the interaction mediates the association with the ESCRT-I complex (By similarity). Interacts with SNAP25; the interaction is direct and decreases with addition of increasing concentrations of free calcium (PubMed:10825299, PubMed:9039916). Interacts with SNX1; the interaction is direct (PubMed:11110793). Component of a 550 kDa membrane complex at least composed of HGS and SNX1 but excluding EGFR (PubMed:11110793). Interacts with TRAK2 (PubMed:17062640). Interacts with TRAK1 (By similarity). Component of the CART complex, at least composed of ACTN4, HGS/HRS, MYO5B and TRIM3 (By similarity). Interacts (via UIM domain) with UBQLN1 (via ubiquitin-like domain) (By similarity). Interacts with ARRDC3 (By similarity). Identified in a complex containing at least ARRDC4, AVPR2 and HGS (By similarity). Interacts with LAPTM4B; promotes HGS ubiquitination (By similarity).</text>
</comment>
<comment type="interaction">
    <interactant intactId="EBI-7092491">
        <id>Q9JJ50</id>
    </interactant>
    <interactant intactId="EBI-994539">
        <id>P54256</id>
        <label>Hap1</label>
    </interactant>
    <organismsDiffer>false</organismsDiffer>
    <experiments>5</experiments>
</comment>
<comment type="interaction">
    <interactant intactId="EBI-7092491">
        <id>Q9JJ50</id>
    </interactant>
    <interactant intactId="EBI-994554">
        <id>P54256-2</id>
        <label>Hap1</label>
    </interactant>
    <organismsDiffer>false</organismsDiffer>
    <experiments>5</experiments>
</comment>
<comment type="subcellular location">
    <subcellularLocation>
        <location evidence="9">Cytoplasm</location>
    </subcellularLocation>
    <subcellularLocation>
        <location evidence="9">Early endosome membrane</location>
        <topology evidence="9">Peripheral membrane protein</topology>
        <orientation evidence="9">Cytoplasmic side</orientation>
    </subcellularLocation>
    <subcellularLocation>
        <location evidence="9">Endosome</location>
        <location evidence="9">Multivesicular body membrane</location>
        <topology evidence="9">Peripheral membrane protein</topology>
    </subcellularLocation>
    <text evidence="2">Colocalizes with UBQLN1 in ubiquitin-rich cytoplasmic aggregates that are not endocytic compartments.</text>
</comment>
<comment type="alternative products">
    <event type="alternative splicing"/>
    <isoform>
        <id>Q9JJ50-1</id>
        <name>1</name>
        <sequence type="displayed"/>
    </isoform>
    <isoform>
        <id>Q9JJ50-2</id>
        <name>2</name>
        <sequence type="described" ref="VSP_014852"/>
    </isoform>
</comment>
<comment type="tissue specificity">
    <text evidence="9 12 13">Ubiquitously expressed.</text>
</comment>
<comment type="domain">
    <text evidence="1">Has a double-sided UIM that can bind 2 ubiquitin molecules, one on each side of the helix.</text>
</comment>
<comment type="domain">
    <text evidence="1">The FYVE-type zinc finger domain mediates interactions with phosphatidylinositol 3-phosphate in membranes of early endosomes and penetrates bilayers. The FYVE domain insertion into PtdIns(3)P-enriched membranes is substantially increased in acidic conditions (By similarity).</text>
</comment>
<comment type="PTM">
    <text evidence="3">Phosphorylated on Tyr-334. This phosphorylation occurs in response to EGF. A minor site of phosphorylation on Tyr-329 is detected. Protein phosphorylation may also be triggered in response to IL-2, GM-CSF and HGF (By similarity).</text>
</comment>
<comment type="PTM">
    <text evidence="2">Ubiquitinated by ITCH.</text>
</comment>
<comment type="sequence caution" evidence="16">
    <conflict type="frameshift">
        <sequence resource="EMBL-CDS" id="AAB49681"/>
    </conflict>
</comment>
<keyword id="KW-0007">Acetylation</keyword>
<keyword id="KW-0025">Alternative splicing</keyword>
<keyword id="KW-0963">Cytoplasm</keyword>
<keyword id="KW-0967">Endosome</keyword>
<keyword id="KW-0472">Membrane</keyword>
<keyword id="KW-0479">Metal-binding</keyword>
<keyword id="KW-0597">Phosphoprotein</keyword>
<keyword id="KW-0653">Protein transport</keyword>
<keyword id="KW-1185">Reference proteome</keyword>
<keyword id="KW-0813">Transport</keyword>
<keyword id="KW-0832">Ubl conjugation</keyword>
<keyword id="KW-0862">Zinc</keyword>
<keyword id="KW-0863">Zinc-finger</keyword>
<evidence type="ECO:0000250" key="1"/>
<evidence type="ECO:0000250" key="2">
    <source>
        <dbReference type="UniProtKB" id="O14964"/>
    </source>
</evidence>
<evidence type="ECO:0000250" key="3">
    <source>
        <dbReference type="UniProtKB" id="Q99LI8"/>
    </source>
</evidence>
<evidence type="ECO:0000255" key="4">
    <source>
        <dbReference type="PROSITE-ProRule" id="PRU00091"/>
    </source>
</evidence>
<evidence type="ECO:0000255" key="5">
    <source>
        <dbReference type="PROSITE-ProRule" id="PRU00213"/>
    </source>
</evidence>
<evidence type="ECO:0000255" key="6">
    <source>
        <dbReference type="PROSITE-ProRule" id="PRU00218"/>
    </source>
</evidence>
<evidence type="ECO:0000256" key="7">
    <source>
        <dbReference type="SAM" id="MobiDB-lite"/>
    </source>
</evidence>
<evidence type="ECO:0000269" key="8">
    <source>
    </source>
</evidence>
<evidence type="ECO:0000269" key="9">
    <source>
    </source>
</evidence>
<evidence type="ECO:0000269" key="10">
    <source>
    </source>
</evidence>
<evidence type="ECO:0000269" key="11">
    <source>
    </source>
</evidence>
<evidence type="ECO:0000269" key="12">
    <source>
    </source>
</evidence>
<evidence type="ECO:0000269" key="13">
    <source>
    </source>
</evidence>
<evidence type="ECO:0000303" key="14">
    <source>
    </source>
</evidence>
<evidence type="ECO:0000303" key="15">
    <source>
    </source>
</evidence>
<evidence type="ECO:0000305" key="16"/>
<dbReference type="EMBL" id="U87863">
    <property type="protein sequence ID" value="AAB49681.1"/>
    <property type="status" value="ALT_FRAME"/>
    <property type="molecule type" value="mRNA"/>
</dbReference>
<dbReference type="EMBL" id="AB002811">
    <property type="protein sequence ID" value="BAD08342.1"/>
    <property type="molecule type" value="mRNA"/>
</dbReference>
<dbReference type="EMBL" id="AF036344">
    <property type="protein sequence ID" value="AAF76251.1"/>
    <property type="molecule type" value="mRNA"/>
</dbReference>
<dbReference type="EMBL" id="BC083561">
    <property type="protein sequence ID" value="AAH83561.1"/>
    <property type="molecule type" value="mRNA"/>
</dbReference>
<dbReference type="RefSeq" id="NP_001386548.1">
    <molecule id="Q9JJ50-1"/>
    <property type="nucleotide sequence ID" value="NM_001399619.1"/>
</dbReference>
<dbReference type="RefSeq" id="NP_062260.2">
    <molecule id="Q9JJ50-2"/>
    <property type="nucleotide sequence ID" value="NM_019387.3"/>
</dbReference>
<dbReference type="SMR" id="Q9JJ50"/>
<dbReference type="BioGRID" id="248562">
    <property type="interactions" value="7"/>
</dbReference>
<dbReference type="CORUM" id="Q9JJ50"/>
<dbReference type="FunCoup" id="Q9JJ50">
    <property type="interactions" value="3132"/>
</dbReference>
<dbReference type="IntAct" id="Q9JJ50">
    <property type="interactions" value="1"/>
</dbReference>
<dbReference type="MINT" id="Q9JJ50"/>
<dbReference type="STRING" id="10116.ENSRNOP00000051849"/>
<dbReference type="CarbonylDB" id="Q9JJ50"/>
<dbReference type="GlyGen" id="Q9JJ50">
    <property type="glycosylation" value="4 sites"/>
</dbReference>
<dbReference type="iPTMnet" id="Q9JJ50"/>
<dbReference type="PhosphoSitePlus" id="Q9JJ50"/>
<dbReference type="jPOST" id="Q9JJ50"/>
<dbReference type="PaxDb" id="10116-ENSRNOP00000051849"/>
<dbReference type="GeneID" id="56084"/>
<dbReference type="KEGG" id="rno:56084"/>
<dbReference type="AGR" id="RGD:69225"/>
<dbReference type="CTD" id="9146"/>
<dbReference type="RGD" id="69225">
    <property type="gene designation" value="Hgs"/>
</dbReference>
<dbReference type="eggNOG" id="KOG1818">
    <property type="taxonomic scope" value="Eukaryota"/>
</dbReference>
<dbReference type="HOGENOM" id="CLU_013062_1_0_1"/>
<dbReference type="InParanoid" id="Q9JJ50"/>
<dbReference type="PhylomeDB" id="Q9JJ50"/>
<dbReference type="Reactome" id="R-RNO-182971">
    <property type="pathway name" value="EGFR downregulation"/>
</dbReference>
<dbReference type="Reactome" id="R-RNO-432720">
    <property type="pathway name" value="Lysosome Vesicle Biogenesis"/>
</dbReference>
<dbReference type="Reactome" id="R-RNO-5689880">
    <property type="pathway name" value="Ub-specific processing proteases"/>
</dbReference>
<dbReference type="Reactome" id="R-RNO-6807004">
    <property type="pathway name" value="Negative regulation of MET activity"/>
</dbReference>
<dbReference type="Reactome" id="R-RNO-8856825">
    <property type="pathway name" value="Cargo recognition for clathrin-mediated endocytosis"/>
</dbReference>
<dbReference type="Reactome" id="R-RNO-8856828">
    <property type="pathway name" value="Clathrin-mediated endocytosis"/>
</dbReference>
<dbReference type="Reactome" id="R-RNO-9013420">
    <property type="pathway name" value="RHOU GTPase cycle"/>
</dbReference>
<dbReference type="Reactome" id="R-RNO-917729">
    <property type="pathway name" value="Endosomal Sorting Complex Required For Transport (ESCRT)"/>
</dbReference>
<dbReference type="Reactome" id="R-RNO-9706019">
    <property type="pathway name" value="RHOBTB3 ATPase cycle"/>
</dbReference>
<dbReference type="PRO" id="PR:Q9JJ50"/>
<dbReference type="Proteomes" id="UP000002494">
    <property type="component" value="Unplaced"/>
</dbReference>
<dbReference type="GO" id="GO:0005737">
    <property type="term" value="C:cytoplasm"/>
    <property type="evidence" value="ECO:0000266"/>
    <property type="project" value="RGD"/>
</dbReference>
<dbReference type="GO" id="GO:0005769">
    <property type="term" value="C:early endosome"/>
    <property type="evidence" value="ECO:0000266"/>
    <property type="project" value="RGD"/>
</dbReference>
<dbReference type="GO" id="GO:0031901">
    <property type="term" value="C:early endosome membrane"/>
    <property type="evidence" value="ECO:0007669"/>
    <property type="project" value="UniProtKB-SubCell"/>
</dbReference>
<dbReference type="GO" id="GO:0005768">
    <property type="term" value="C:endosome"/>
    <property type="evidence" value="ECO:0000266"/>
    <property type="project" value="RGD"/>
</dbReference>
<dbReference type="GO" id="GO:0033565">
    <property type="term" value="C:ESCRT-0 complex"/>
    <property type="evidence" value="ECO:0000266"/>
    <property type="project" value="RGD"/>
</dbReference>
<dbReference type="GO" id="GO:0032585">
    <property type="term" value="C:multivesicular body membrane"/>
    <property type="evidence" value="ECO:0007669"/>
    <property type="project" value="UniProtKB-SubCell"/>
</dbReference>
<dbReference type="GO" id="GO:0030141">
    <property type="term" value="C:secretory granule"/>
    <property type="evidence" value="ECO:0000314"/>
    <property type="project" value="RGD"/>
</dbReference>
<dbReference type="GO" id="GO:0042802">
    <property type="term" value="F:identical protein binding"/>
    <property type="evidence" value="ECO:0000266"/>
    <property type="project" value="RGD"/>
</dbReference>
<dbReference type="GO" id="GO:0035091">
    <property type="term" value="F:phosphatidylinositol binding"/>
    <property type="evidence" value="ECO:0007669"/>
    <property type="project" value="InterPro"/>
</dbReference>
<dbReference type="GO" id="GO:0019904">
    <property type="term" value="F:protein domain specific binding"/>
    <property type="evidence" value="ECO:0000266"/>
    <property type="project" value="RGD"/>
</dbReference>
<dbReference type="GO" id="GO:0043130">
    <property type="term" value="F:ubiquitin binding"/>
    <property type="evidence" value="ECO:0000318"/>
    <property type="project" value="GO_Central"/>
</dbReference>
<dbReference type="GO" id="GO:0044389">
    <property type="term" value="F:ubiquitin-like protein ligase binding"/>
    <property type="evidence" value="ECO:0000266"/>
    <property type="project" value="RGD"/>
</dbReference>
<dbReference type="GO" id="GO:0140036">
    <property type="term" value="F:ubiquitin-modified protein reader activity"/>
    <property type="evidence" value="ECO:0000266"/>
    <property type="project" value="RGD"/>
</dbReference>
<dbReference type="GO" id="GO:0008270">
    <property type="term" value="F:zinc ion binding"/>
    <property type="evidence" value="ECO:0007669"/>
    <property type="project" value="UniProtKB-KW"/>
</dbReference>
<dbReference type="GO" id="GO:0032456">
    <property type="term" value="P:endocytic recycling"/>
    <property type="evidence" value="ECO:0000318"/>
    <property type="project" value="GO_Central"/>
</dbReference>
<dbReference type="GO" id="GO:0008333">
    <property type="term" value="P:endosome to lysosome transport"/>
    <property type="evidence" value="ECO:0000315"/>
    <property type="project" value="RGD"/>
</dbReference>
<dbReference type="GO" id="GO:0010324">
    <property type="term" value="P:membrane invagination"/>
    <property type="evidence" value="ECO:0000266"/>
    <property type="project" value="RGD"/>
</dbReference>
<dbReference type="GO" id="GO:0016525">
    <property type="term" value="P:negative regulation of angiogenesis"/>
    <property type="evidence" value="ECO:0000266"/>
    <property type="project" value="RGD"/>
</dbReference>
<dbReference type="GO" id="GO:0010642">
    <property type="term" value="P:negative regulation of platelet-derived growth factor receptor signaling pathway"/>
    <property type="evidence" value="ECO:0000266"/>
    <property type="project" value="RGD"/>
</dbReference>
<dbReference type="GO" id="GO:0046426">
    <property type="term" value="P:negative regulation of receptor signaling pathway via JAK-STAT"/>
    <property type="evidence" value="ECO:0000266"/>
    <property type="project" value="RGD"/>
</dbReference>
<dbReference type="GO" id="GO:0030948">
    <property type="term" value="P:negative regulation of vascular endothelial growth factor receptor signaling pathway"/>
    <property type="evidence" value="ECO:0000266"/>
    <property type="project" value="RGD"/>
</dbReference>
<dbReference type="GO" id="GO:1903543">
    <property type="term" value="P:positive regulation of exosomal secretion"/>
    <property type="evidence" value="ECO:0000266"/>
    <property type="project" value="RGD"/>
</dbReference>
<dbReference type="GO" id="GO:0010628">
    <property type="term" value="P:positive regulation of gene expression"/>
    <property type="evidence" value="ECO:0000266"/>
    <property type="project" value="RGD"/>
</dbReference>
<dbReference type="GO" id="GO:0072657">
    <property type="term" value="P:protein localization to membrane"/>
    <property type="evidence" value="ECO:0000266"/>
    <property type="project" value="RGD"/>
</dbReference>
<dbReference type="GO" id="GO:0006622">
    <property type="term" value="P:protein targeting to lysosome"/>
    <property type="evidence" value="ECO:0000266"/>
    <property type="project" value="RGD"/>
</dbReference>
<dbReference type="GO" id="GO:0031623">
    <property type="term" value="P:receptor internalization"/>
    <property type="evidence" value="ECO:0000318"/>
    <property type="project" value="GO_Central"/>
</dbReference>
<dbReference type="CDD" id="cd15720">
    <property type="entry name" value="FYVE_Hrs"/>
    <property type="match status" value="1"/>
</dbReference>
<dbReference type="CDD" id="cd21387">
    <property type="entry name" value="GAT_Hrs"/>
    <property type="match status" value="1"/>
</dbReference>
<dbReference type="CDD" id="cd03569">
    <property type="entry name" value="VHS_Hrs"/>
    <property type="match status" value="1"/>
</dbReference>
<dbReference type="FunFam" id="1.20.5.1940:FF:000003">
    <property type="entry name" value="Hepatocyte growth factor-regulated tyrosine kinase substrate"/>
    <property type="match status" value="1"/>
</dbReference>
<dbReference type="FunFam" id="1.25.40.90:FF:000014">
    <property type="entry name" value="Hepatocyte growth factor-regulated tyrosine kinase substrate"/>
    <property type="match status" value="1"/>
</dbReference>
<dbReference type="FunFam" id="3.30.40.10:FF:000028">
    <property type="entry name" value="Putative hepatocyte growth factor-regulated tyrosine kinase substrate"/>
    <property type="match status" value="1"/>
</dbReference>
<dbReference type="Gene3D" id="1.20.5.1940">
    <property type="match status" value="1"/>
</dbReference>
<dbReference type="Gene3D" id="1.25.40.90">
    <property type="match status" value="1"/>
</dbReference>
<dbReference type="Gene3D" id="3.30.40.10">
    <property type="entry name" value="Zinc/RING finger domain, C3HC4 (zinc finger)"/>
    <property type="match status" value="1"/>
</dbReference>
<dbReference type="InterPro" id="IPR008942">
    <property type="entry name" value="ENTH_VHS"/>
</dbReference>
<dbReference type="InterPro" id="IPR017073">
    <property type="entry name" value="HGS/VPS27"/>
</dbReference>
<dbReference type="InterPro" id="IPR024641">
    <property type="entry name" value="HRS_helical"/>
</dbReference>
<dbReference type="InterPro" id="IPR003903">
    <property type="entry name" value="UIM_dom"/>
</dbReference>
<dbReference type="InterPro" id="IPR002014">
    <property type="entry name" value="VHS_dom"/>
</dbReference>
<dbReference type="InterPro" id="IPR000306">
    <property type="entry name" value="Znf_FYVE"/>
</dbReference>
<dbReference type="InterPro" id="IPR017455">
    <property type="entry name" value="Znf_FYVE-rel"/>
</dbReference>
<dbReference type="InterPro" id="IPR011011">
    <property type="entry name" value="Znf_FYVE_PHD"/>
</dbReference>
<dbReference type="InterPro" id="IPR013083">
    <property type="entry name" value="Znf_RING/FYVE/PHD"/>
</dbReference>
<dbReference type="PANTHER" id="PTHR46275">
    <property type="entry name" value="HEPATOCYTE GROWTH FACTOR-REGULATED TYROSINE KINASE SUBSTRATE"/>
    <property type="match status" value="1"/>
</dbReference>
<dbReference type="PANTHER" id="PTHR46275:SF1">
    <property type="entry name" value="HEPATOCYTE GROWTH FACTOR-REGULATED TYROSINE KINASE SUBSTRATE"/>
    <property type="match status" value="1"/>
</dbReference>
<dbReference type="Pfam" id="PF01363">
    <property type="entry name" value="FYVE"/>
    <property type="match status" value="1"/>
</dbReference>
<dbReference type="Pfam" id="PF12210">
    <property type="entry name" value="Hrs_helical"/>
    <property type="match status" value="1"/>
</dbReference>
<dbReference type="Pfam" id="PF00790">
    <property type="entry name" value="VHS"/>
    <property type="match status" value="1"/>
</dbReference>
<dbReference type="PIRSF" id="PIRSF036956">
    <property type="entry name" value="Hrs_Vps27"/>
    <property type="match status" value="1"/>
</dbReference>
<dbReference type="SMART" id="SM00064">
    <property type="entry name" value="FYVE"/>
    <property type="match status" value="1"/>
</dbReference>
<dbReference type="SMART" id="SM00288">
    <property type="entry name" value="VHS"/>
    <property type="match status" value="1"/>
</dbReference>
<dbReference type="SUPFAM" id="SSF48464">
    <property type="entry name" value="ENTH/VHS domain"/>
    <property type="match status" value="1"/>
</dbReference>
<dbReference type="SUPFAM" id="SSF57903">
    <property type="entry name" value="FYVE/PHD zinc finger"/>
    <property type="match status" value="1"/>
</dbReference>
<dbReference type="PROSITE" id="PS50330">
    <property type="entry name" value="UIM"/>
    <property type="match status" value="1"/>
</dbReference>
<dbReference type="PROSITE" id="PS50179">
    <property type="entry name" value="VHS"/>
    <property type="match status" value="1"/>
</dbReference>
<dbReference type="PROSITE" id="PS50178">
    <property type="entry name" value="ZF_FYVE"/>
    <property type="match status" value="1"/>
</dbReference>